<evidence type="ECO:0000255" key="1"/>
<evidence type="ECO:0000305" key="2"/>
<accession>P04740</accession>
<name>FMK1_ECOLX</name>
<protein>
    <recommendedName>
        <fullName>KS71A fimbrillin</fullName>
    </recommendedName>
    <alternativeName>
        <fullName>P-fimbrial antigen</fullName>
    </alternativeName>
</protein>
<gene>
    <name type="primary">KS71A</name>
</gene>
<proteinExistence type="inferred from homology"/>
<feature type="signal peptide" evidence="1">
    <location>
        <begin position="1"/>
        <end position="21"/>
    </location>
</feature>
<feature type="chain" id="PRO_0000009192" description="KS71A fimbrillin">
    <location>
        <begin position="22"/>
        <end position="187"/>
    </location>
</feature>
<feature type="disulfide bond" evidence="2">
    <location>
        <begin position="43"/>
        <end position="82"/>
    </location>
</feature>
<organism>
    <name type="scientific">Escherichia coli</name>
    <dbReference type="NCBI Taxonomy" id="562"/>
    <lineage>
        <taxon>Bacteria</taxon>
        <taxon>Pseudomonadati</taxon>
        <taxon>Pseudomonadota</taxon>
        <taxon>Gammaproteobacteria</taxon>
        <taxon>Enterobacterales</taxon>
        <taxon>Enterobacteriaceae</taxon>
        <taxon>Escherichia</taxon>
    </lineage>
</organism>
<reference key="1">
    <citation type="journal article" date="1985" name="Eur. J. Biochem.">
        <title>Comparison of the nucleotide sequences of the genes encoding the KS71A and F7(1) fimbrial antigens of uropathogenic Escherichia coli.</title>
        <authorList>
            <person name="Rhen M."/>
            <person name="van Die I."/>
            <person name="Rhen V."/>
            <person name="Bergmans H."/>
        </authorList>
    </citation>
    <scope>NUCLEOTIDE SEQUENCE [GENOMIC DNA]</scope>
</reference>
<comment type="function">
    <text>Fimbriae (also called pili), polar filaments radiating from the surface of the bacterium to a length of 0.5-1.5 micrometers and numbering 100-300 per cell, enable bacteria to colonize the epithelium of specific host organs.</text>
</comment>
<comment type="subcellular location">
    <subcellularLocation>
        <location>Fimbrium</location>
    </subcellularLocation>
</comment>
<comment type="similarity">
    <text evidence="2">Belongs to the fimbrial protein family.</text>
</comment>
<dbReference type="EMBL" id="X02921">
    <property type="protein sequence ID" value="CAA26678.1"/>
    <property type="molecule type" value="Genomic_DNA"/>
</dbReference>
<dbReference type="PIR" id="A23117">
    <property type="entry name" value="YQECKS"/>
</dbReference>
<dbReference type="SMR" id="P04740"/>
<dbReference type="GO" id="GO:0009289">
    <property type="term" value="C:pilus"/>
    <property type="evidence" value="ECO:0007669"/>
    <property type="project" value="UniProtKB-SubCell"/>
</dbReference>
<dbReference type="GO" id="GO:0043709">
    <property type="term" value="P:cell adhesion involved in single-species biofilm formation"/>
    <property type="evidence" value="ECO:0007669"/>
    <property type="project" value="TreeGrafter"/>
</dbReference>
<dbReference type="Gene3D" id="2.60.40.1090">
    <property type="entry name" value="Fimbrial-type adhesion domain"/>
    <property type="match status" value="1"/>
</dbReference>
<dbReference type="InterPro" id="IPR000259">
    <property type="entry name" value="Adhesion_dom_fimbrial"/>
</dbReference>
<dbReference type="InterPro" id="IPR036937">
    <property type="entry name" value="Adhesion_dom_fimbrial_sf"/>
</dbReference>
<dbReference type="InterPro" id="IPR008966">
    <property type="entry name" value="Adhesion_dom_sf"/>
</dbReference>
<dbReference type="InterPro" id="IPR050263">
    <property type="entry name" value="Bact_Fimbrial_Adh_Pro"/>
</dbReference>
<dbReference type="PANTHER" id="PTHR33420:SF26">
    <property type="entry name" value="FIMBRIAL SUBUNIT"/>
    <property type="match status" value="1"/>
</dbReference>
<dbReference type="PANTHER" id="PTHR33420">
    <property type="entry name" value="FIMBRIAL SUBUNIT ELFA-RELATED"/>
    <property type="match status" value="1"/>
</dbReference>
<dbReference type="Pfam" id="PF00419">
    <property type="entry name" value="Fimbrial"/>
    <property type="match status" value="1"/>
</dbReference>
<dbReference type="SUPFAM" id="SSF49401">
    <property type="entry name" value="Bacterial adhesins"/>
    <property type="match status" value="1"/>
</dbReference>
<keyword id="KW-1015">Disulfide bond</keyword>
<keyword id="KW-0281">Fimbrium</keyword>
<keyword id="KW-0732">Signal</keyword>
<sequence>MIKSVIAGAVAMAVVSFGANAAASIPQGQGEVSFKGTVVDAPCGIETQSAKQEIDFGQISKSFLQEGGETQPKDLNIKLVNCDITNLKQLQGGAAKKGTVSLTFSGVPAENADDMLQTVGDTNTAIVVTDSSGKRVKFDGATETGASNLINGDNTIHFTAFVKKDNSGKNVAEGAFSAVANFNLTYQ</sequence>